<feature type="chain" id="PRO_0000067072" description="Cell division cycle-related protein res1/sct1">
    <location>
        <begin position="1"/>
        <end position="637"/>
    </location>
</feature>
<feature type="domain" description="HTH APSES-type" evidence="1">
    <location>
        <begin position="6"/>
        <end position="112"/>
    </location>
</feature>
<feature type="repeat" description="ANK 1">
    <location>
        <begin position="236"/>
        <end position="265"/>
    </location>
</feature>
<feature type="repeat" description="ANK 2">
    <location>
        <begin position="357"/>
        <end position="386"/>
    </location>
</feature>
<feature type="DNA-binding region" description="H-T-H motif" evidence="1">
    <location>
        <begin position="37"/>
        <end position="58"/>
    </location>
</feature>
<feature type="region of interest" description="Disordered" evidence="2">
    <location>
        <begin position="114"/>
        <end position="137"/>
    </location>
</feature>
<feature type="mutagenesis site" description="Renders the cell independent of cdc10 function for the execution of start." evidence="3">
    <original>E</original>
    <variation>K</variation>
    <location>
        <position position="56"/>
    </location>
</feature>
<reference key="1">
    <citation type="journal article" date="1993" name="Cell">
        <title>Sct1 functions in partnership with Cdc10 in a transcription complex that activates cell cycle START and inhibits differentiation.</title>
        <authorList>
            <person name="Caligiuri M."/>
            <person name="Beach D."/>
        </authorList>
    </citation>
    <scope>NUCLEOTIDE SEQUENCE [MRNA]</scope>
    <scope>MUTAGENESIS OF GLU-56</scope>
</reference>
<reference key="2">
    <citation type="journal article" date="1992" name="EMBO J.">
        <title>A new cdc gene required for S phase entry of Schizosaccharomyces pombe encodes a protein similar to the cdc 10+ and SWI4 gene products.</title>
        <authorList>
            <person name="Tanaka K."/>
            <person name="Okazaki K."/>
            <person name="Okazaki N."/>
            <person name="Ueda T."/>
            <person name="Sugiyama A."/>
            <person name="Nojima H."/>
            <person name="Okayama H."/>
        </authorList>
    </citation>
    <scope>NUCLEOTIDE SEQUENCE [MRNA]</scope>
    <source>
        <strain>972 / ATCC 24843</strain>
    </source>
</reference>
<reference key="3">
    <citation type="journal article" date="2002" name="Nature">
        <title>The genome sequence of Schizosaccharomyces pombe.</title>
        <authorList>
            <person name="Wood V."/>
            <person name="Gwilliam R."/>
            <person name="Rajandream M.A."/>
            <person name="Lyne M.H."/>
            <person name="Lyne R."/>
            <person name="Stewart A."/>
            <person name="Sgouros J.G."/>
            <person name="Peat N."/>
            <person name="Hayles J."/>
            <person name="Baker S.G."/>
            <person name="Basham D."/>
            <person name="Bowman S."/>
            <person name="Brooks K."/>
            <person name="Brown D."/>
            <person name="Brown S."/>
            <person name="Chillingworth T."/>
            <person name="Churcher C.M."/>
            <person name="Collins M."/>
            <person name="Connor R."/>
            <person name="Cronin A."/>
            <person name="Davis P."/>
            <person name="Feltwell T."/>
            <person name="Fraser A."/>
            <person name="Gentles S."/>
            <person name="Goble A."/>
            <person name="Hamlin N."/>
            <person name="Harris D.E."/>
            <person name="Hidalgo J."/>
            <person name="Hodgson G."/>
            <person name="Holroyd S."/>
            <person name="Hornsby T."/>
            <person name="Howarth S."/>
            <person name="Huckle E.J."/>
            <person name="Hunt S."/>
            <person name="Jagels K."/>
            <person name="James K.D."/>
            <person name="Jones L."/>
            <person name="Jones M."/>
            <person name="Leather S."/>
            <person name="McDonald S."/>
            <person name="McLean J."/>
            <person name="Mooney P."/>
            <person name="Moule S."/>
            <person name="Mungall K.L."/>
            <person name="Murphy L.D."/>
            <person name="Niblett D."/>
            <person name="Odell C."/>
            <person name="Oliver K."/>
            <person name="O'Neil S."/>
            <person name="Pearson D."/>
            <person name="Quail M.A."/>
            <person name="Rabbinowitsch E."/>
            <person name="Rutherford K.M."/>
            <person name="Rutter S."/>
            <person name="Saunders D."/>
            <person name="Seeger K."/>
            <person name="Sharp S."/>
            <person name="Skelton J."/>
            <person name="Simmonds M.N."/>
            <person name="Squares R."/>
            <person name="Squares S."/>
            <person name="Stevens K."/>
            <person name="Taylor K."/>
            <person name="Taylor R.G."/>
            <person name="Tivey A."/>
            <person name="Walsh S.V."/>
            <person name="Warren T."/>
            <person name="Whitehead S."/>
            <person name="Woodward J.R."/>
            <person name="Volckaert G."/>
            <person name="Aert R."/>
            <person name="Robben J."/>
            <person name="Grymonprez B."/>
            <person name="Weltjens I."/>
            <person name="Vanstreels E."/>
            <person name="Rieger M."/>
            <person name="Schaefer M."/>
            <person name="Mueller-Auer S."/>
            <person name="Gabel C."/>
            <person name="Fuchs M."/>
            <person name="Duesterhoeft A."/>
            <person name="Fritzc C."/>
            <person name="Holzer E."/>
            <person name="Moestl D."/>
            <person name="Hilbert H."/>
            <person name="Borzym K."/>
            <person name="Langer I."/>
            <person name="Beck A."/>
            <person name="Lehrach H."/>
            <person name="Reinhardt R."/>
            <person name="Pohl T.M."/>
            <person name="Eger P."/>
            <person name="Zimmermann W."/>
            <person name="Wedler H."/>
            <person name="Wambutt R."/>
            <person name="Purnelle B."/>
            <person name="Goffeau A."/>
            <person name="Cadieu E."/>
            <person name="Dreano S."/>
            <person name="Gloux S."/>
            <person name="Lelaure V."/>
            <person name="Mottier S."/>
            <person name="Galibert F."/>
            <person name="Aves S.J."/>
            <person name="Xiang Z."/>
            <person name="Hunt C."/>
            <person name="Moore K."/>
            <person name="Hurst S.M."/>
            <person name="Lucas M."/>
            <person name="Rochet M."/>
            <person name="Gaillardin C."/>
            <person name="Tallada V.A."/>
            <person name="Garzon A."/>
            <person name="Thode G."/>
            <person name="Daga R.R."/>
            <person name="Cruzado L."/>
            <person name="Jimenez J."/>
            <person name="Sanchez M."/>
            <person name="del Rey F."/>
            <person name="Benito J."/>
            <person name="Dominguez A."/>
            <person name="Revuelta J.L."/>
            <person name="Moreno S."/>
            <person name="Armstrong J."/>
            <person name="Forsburg S.L."/>
            <person name="Cerutti L."/>
            <person name="Lowe T."/>
            <person name="McCombie W.R."/>
            <person name="Paulsen I."/>
            <person name="Potashkin J."/>
            <person name="Shpakovski G.V."/>
            <person name="Ussery D."/>
            <person name="Barrell B.G."/>
            <person name="Nurse P."/>
        </authorList>
    </citation>
    <scope>NUCLEOTIDE SEQUENCE [LARGE SCALE GENOMIC DNA]</scope>
    <source>
        <strain>972 / ATCC 24843</strain>
    </source>
</reference>
<gene>
    <name type="primary">res1</name>
    <name type="synonym">sct1</name>
    <name type="ORF">SPBC725.16</name>
</gene>
<evidence type="ECO:0000255" key="1">
    <source>
        <dbReference type="PROSITE-ProRule" id="PRU00630"/>
    </source>
</evidence>
<evidence type="ECO:0000256" key="2">
    <source>
        <dbReference type="SAM" id="MobiDB-lite"/>
    </source>
</evidence>
<evidence type="ECO:0000269" key="3">
    <source>
    </source>
</evidence>
<protein>
    <recommendedName>
        <fullName>Cell division cycle-related protein res1/sct1</fullName>
    </recommendedName>
    <alternativeName>
        <fullName>p72sct1</fullName>
    </alternativeName>
</protein>
<accession>P33520</accession>
<proteinExistence type="evidence at protein level"/>
<sequence>MYNDQIHKITYSGVEVFEYTINGFPLMKRCHDNWLNATQILKIAELDKPRRTRILEKFAQKGLHEKIQGGCGKYQGTWVPSERAVELAHEYNVFDLIQPLIEYSGSAFMPMSTFTPQSNRKPTEAYRRNSPVKKSFSRPSHSLLYPYTSSNNMTSTSRMSGIHDALSLQSDFTRSPDMPSDSFTGSLHDIKASPFSSNNYAQSLLDYFLLPNTTQPPDFVYDRPSDWDVNAGIDEDGHTALHWAAAMGNLEMMHALLQAGANVVAVNYLQQTSLMRCVMFTMNYDLQTFEVVSELLQSAICMNDSFGQTVFHHIALLASSKSKMEAARYYMDILLQNLTATQSVDVAAQIINLQDDHGDTALLICARNGAKKCARLLLSFYASSSIPNNQGQYPTDFLSSKDMSFPENDDSPLNSKIEDNLIDNLKYPQSLDDHLSSKKPISYFSNKLTHQTLPNVFTQLSELSKCHEASLAEKQLTYNLAMEALEQTVRETETCQRLWNERTNNDENYLVNQREDLIHQCKKFLHTLKTARYYLETVQLHQLKKYVTYFSQIWSTDELADISETKNLVGHDTKTNRSSLSSKHEVDLFTAENEAAREKLVEQLCSLQAQRKQKINEILNLLSMGMYNTINTDQSGS</sequence>
<dbReference type="EMBL" id="L09270">
    <property type="protein sequence ID" value="AAA35340.1"/>
    <property type="molecule type" value="mRNA"/>
</dbReference>
<dbReference type="EMBL" id="X68789">
    <property type="protein sequence ID" value="CAA48683.1"/>
    <property type="molecule type" value="mRNA"/>
</dbReference>
<dbReference type="EMBL" id="CU329671">
    <property type="protein sequence ID" value="CAA22188.1"/>
    <property type="molecule type" value="Genomic_DNA"/>
</dbReference>
<dbReference type="PIR" id="A45777">
    <property type="entry name" value="A45777"/>
</dbReference>
<dbReference type="RefSeq" id="NP_595496.1">
    <property type="nucleotide sequence ID" value="NM_001021407.2"/>
</dbReference>
<dbReference type="SMR" id="P33520"/>
<dbReference type="BioGRID" id="277668">
    <property type="interactions" value="501"/>
</dbReference>
<dbReference type="DIP" id="DIP-210N"/>
<dbReference type="FunCoup" id="P33520">
    <property type="interactions" value="32"/>
</dbReference>
<dbReference type="IntAct" id="P33520">
    <property type="interactions" value="3"/>
</dbReference>
<dbReference type="MINT" id="P33520"/>
<dbReference type="STRING" id="284812.P33520"/>
<dbReference type="iPTMnet" id="P33520"/>
<dbReference type="PaxDb" id="4896-SPBC725.16.1"/>
<dbReference type="EnsemblFungi" id="SPBC725.16.1">
    <property type="protein sequence ID" value="SPBC725.16.1:pep"/>
    <property type="gene ID" value="SPBC725.16"/>
</dbReference>
<dbReference type="GeneID" id="2541153"/>
<dbReference type="KEGG" id="spo:2541153"/>
<dbReference type="PomBase" id="SPBC725.16">
    <property type="gene designation" value="res1"/>
</dbReference>
<dbReference type="VEuPathDB" id="FungiDB:SPBC725.16"/>
<dbReference type="eggNOG" id="KOG4177">
    <property type="taxonomic scope" value="Eukaryota"/>
</dbReference>
<dbReference type="HOGENOM" id="CLU_009666_3_1_1"/>
<dbReference type="InParanoid" id="P33520"/>
<dbReference type="OMA" id="AMGNLEM"/>
<dbReference type="PhylomeDB" id="P33520"/>
<dbReference type="PRO" id="PR:P33520"/>
<dbReference type="Proteomes" id="UP000002485">
    <property type="component" value="Chromosome II"/>
</dbReference>
<dbReference type="GO" id="GO:0000785">
    <property type="term" value="C:chromatin"/>
    <property type="evidence" value="ECO:0000314"/>
    <property type="project" value="PomBase"/>
</dbReference>
<dbReference type="GO" id="GO:0030907">
    <property type="term" value="C:MBF transcription complex"/>
    <property type="evidence" value="ECO:0000314"/>
    <property type="project" value="PomBase"/>
</dbReference>
<dbReference type="GO" id="GO:0005634">
    <property type="term" value="C:nucleus"/>
    <property type="evidence" value="ECO:0007005"/>
    <property type="project" value="PomBase"/>
</dbReference>
<dbReference type="GO" id="GO:0001228">
    <property type="term" value="F:DNA-binding transcription activator activity, RNA polymerase II-specific"/>
    <property type="evidence" value="ECO:0000315"/>
    <property type="project" value="PomBase"/>
</dbReference>
<dbReference type="GO" id="GO:0000978">
    <property type="term" value="F:RNA polymerase II cis-regulatory region sequence-specific DNA binding"/>
    <property type="evidence" value="ECO:0000314"/>
    <property type="project" value="PomBase"/>
</dbReference>
<dbReference type="GO" id="GO:0045893">
    <property type="term" value="P:positive regulation of DNA-templated transcription"/>
    <property type="evidence" value="ECO:0000315"/>
    <property type="project" value="PomBase"/>
</dbReference>
<dbReference type="GO" id="GO:0045944">
    <property type="term" value="P:positive regulation of transcription by RNA polymerase II"/>
    <property type="evidence" value="ECO:0000315"/>
    <property type="project" value="PomBase"/>
</dbReference>
<dbReference type="GO" id="GO:0006357">
    <property type="term" value="P:regulation of transcription by RNA polymerase II"/>
    <property type="evidence" value="ECO:0000315"/>
    <property type="project" value="PomBase"/>
</dbReference>
<dbReference type="FunFam" id="3.10.260.10:FF:000004">
    <property type="entry name" value="Transcription factor MBP1"/>
    <property type="match status" value="1"/>
</dbReference>
<dbReference type="Gene3D" id="1.25.40.20">
    <property type="entry name" value="Ankyrin repeat-containing domain"/>
    <property type="match status" value="1"/>
</dbReference>
<dbReference type="Gene3D" id="3.10.260.10">
    <property type="entry name" value="Transcription regulator HTH, APSES-type DNA-binding domain"/>
    <property type="match status" value="1"/>
</dbReference>
<dbReference type="InterPro" id="IPR002110">
    <property type="entry name" value="Ankyrin_rpt"/>
</dbReference>
<dbReference type="InterPro" id="IPR036770">
    <property type="entry name" value="Ankyrin_rpt-contain_sf"/>
</dbReference>
<dbReference type="InterPro" id="IPR036887">
    <property type="entry name" value="HTH_APSES_sf"/>
</dbReference>
<dbReference type="InterPro" id="IPR018004">
    <property type="entry name" value="KilA/APSES_HTH"/>
</dbReference>
<dbReference type="InterPro" id="IPR051642">
    <property type="entry name" value="SWI6-like"/>
</dbReference>
<dbReference type="InterPro" id="IPR003163">
    <property type="entry name" value="Tscrpt_reg_HTH_APSES-type"/>
</dbReference>
<dbReference type="PANTHER" id="PTHR43828">
    <property type="entry name" value="ASPARAGINASE"/>
    <property type="match status" value="1"/>
</dbReference>
<dbReference type="PANTHER" id="PTHR43828:SF16">
    <property type="entry name" value="CELL DIVISION CYCLE-RELATED PROTEIN RES1_SCT1"/>
    <property type="match status" value="1"/>
</dbReference>
<dbReference type="Pfam" id="PF00023">
    <property type="entry name" value="Ank"/>
    <property type="match status" value="2"/>
</dbReference>
<dbReference type="Pfam" id="PF04383">
    <property type="entry name" value="KilA-N"/>
    <property type="match status" value="1"/>
</dbReference>
<dbReference type="SMART" id="SM00248">
    <property type="entry name" value="ANK"/>
    <property type="match status" value="2"/>
</dbReference>
<dbReference type="SMART" id="SM01252">
    <property type="entry name" value="KilA-N"/>
    <property type="match status" value="1"/>
</dbReference>
<dbReference type="SUPFAM" id="SSF48403">
    <property type="entry name" value="Ankyrin repeat"/>
    <property type="match status" value="1"/>
</dbReference>
<dbReference type="SUPFAM" id="SSF54616">
    <property type="entry name" value="DNA-binding domain of Mlu1-box binding protein MBP1"/>
    <property type="match status" value="1"/>
</dbReference>
<dbReference type="PROSITE" id="PS50297">
    <property type="entry name" value="ANK_REP_REGION"/>
    <property type="match status" value="2"/>
</dbReference>
<dbReference type="PROSITE" id="PS50088">
    <property type="entry name" value="ANK_REPEAT"/>
    <property type="match status" value="1"/>
</dbReference>
<dbReference type="PROSITE" id="PS51299">
    <property type="entry name" value="HTH_APSES"/>
    <property type="match status" value="1"/>
</dbReference>
<organism>
    <name type="scientific">Schizosaccharomyces pombe (strain 972 / ATCC 24843)</name>
    <name type="common">Fission yeast</name>
    <dbReference type="NCBI Taxonomy" id="284812"/>
    <lineage>
        <taxon>Eukaryota</taxon>
        <taxon>Fungi</taxon>
        <taxon>Dikarya</taxon>
        <taxon>Ascomycota</taxon>
        <taxon>Taphrinomycotina</taxon>
        <taxon>Schizosaccharomycetes</taxon>
        <taxon>Schizosaccharomycetales</taxon>
        <taxon>Schizosaccharomycetaceae</taxon>
        <taxon>Schizosaccharomyces</taxon>
    </lineage>
</organism>
<keyword id="KW-0040">ANK repeat</keyword>
<keyword id="KW-0131">Cell cycle</keyword>
<keyword id="KW-0238">DNA-binding</keyword>
<keyword id="KW-1185">Reference proteome</keyword>
<keyword id="KW-0677">Repeat</keyword>
<name>RES1_SCHPO</name>
<comment type="function">
    <text>Acts as a positive regulator of the mitotic cell cycle and as a negative regulator of sexual differentiation. May be involved in the transcriptional regulation of the cdc22 and cdt1 genes. Is an integral component of the DSC1-like complex.</text>
</comment>
<comment type="subunit">
    <text>DSC1 contains cdc10 and sct1/res1.</text>
</comment>
<comment type="interaction">
    <interactant intactId="EBI-1149288">
        <id>P33520</id>
    </interactant>
    <interactant intactId="EBI-1149212">
        <id>P36630</id>
        <label>cig2</label>
    </interactant>
    <organismsDiffer>false</organismsDiffer>
    <experiments>3</experiments>
</comment>
<comment type="interaction">
    <interactant intactId="EBI-1149288">
        <id>P33520</id>
    </interactant>
    <interactant intactId="EBI-1149177">
        <id>P41412</id>
        <label>res2</label>
    </interactant>
    <organismsDiffer>false</organismsDiffer>
    <experiments>2</experiments>
</comment>